<sequence length="179" mass="20302">MAKLHDYYKDEVVKKLMTEFNYNSVMQVPRVEKITLNMGVGEAIADKKLLDNAAADLAAISGQKPLITKARKSVAGFKIRQGYPIGCKVTLRGERMWEFFERLITIAVPRIRDFRGLSAKSFDGRGNYSMGVREQIIFPEIDYDKVDRVRGLDITITTTAKSDEEGRALLAAFDFPFRK</sequence>
<accession>B7N192</accession>
<organism>
    <name type="scientific">Escherichia coli O81 (strain ED1a)</name>
    <dbReference type="NCBI Taxonomy" id="585397"/>
    <lineage>
        <taxon>Bacteria</taxon>
        <taxon>Pseudomonadati</taxon>
        <taxon>Pseudomonadota</taxon>
        <taxon>Gammaproteobacteria</taxon>
        <taxon>Enterobacterales</taxon>
        <taxon>Enterobacteriaceae</taxon>
        <taxon>Escherichia</taxon>
    </lineage>
</organism>
<proteinExistence type="inferred from homology"/>
<reference key="1">
    <citation type="journal article" date="2009" name="PLoS Genet.">
        <title>Organised genome dynamics in the Escherichia coli species results in highly diverse adaptive paths.</title>
        <authorList>
            <person name="Touchon M."/>
            <person name="Hoede C."/>
            <person name="Tenaillon O."/>
            <person name="Barbe V."/>
            <person name="Baeriswyl S."/>
            <person name="Bidet P."/>
            <person name="Bingen E."/>
            <person name="Bonacorsi S."/>
            <person name="Bouchier C."/>
            <person name="Bouvet O."/>
            <person name="Calteau A."/>
            <person name="Chiapello H."/>
            <person name="Clermont O."/>
            <person name="Cruveiller S."/>
            <person name="Danchin A."/>
            <person name="Diard M."/>
            <person name="Dossat C."/>
            <person name="Karoui M.E."/>
            <person name="Frapy E."/>
            <person name="Garry L."/>
            <person name="Ghigo J.M."/>
            <person name="Gilles A.M."/>
            <person name="Johnson J."/>
            <person name="Le Bouguenec C."/>
            <person name="Lescat M."/>
            <person name="Mangenot S."/>
            <person name="Martinez-Jehanne V."/>
            <person name="Matic I."/>
            <person name="Nassif X."/>
            <person name="Oztas S."/>
            <person name="Petit M.A."/>
            <person name="Pichon C."/>
            <person name="Rouy Z."/>
            <person name="Ruf C.S."/>
            <person name="Schneider D."/>
            <person name="Tourret J."/>
            <person name="Vacherie B."/>
            <person name="Vallenet D."/>
            <person name="Medigue C."/>
            <person name="Rocha E.P.C."/>
            <person name="Denamur E."/>
        </authorList>
    </citation>
    <scope>NUCLEOTIDE SEQUENCE [LARGE SCALE GENOMIC DNA]</scope>
    <source>
        <strain>ED1a</strain>
    </source>
</reference>
<evidence type="ECO:0000255" key="1">
    <source>
        <dbReference type="HAMAP-Rule" id="MF_01333"/>
    </source>
</evidence>
<evidence type="ECO:0000305" key="2"/>
<gene>
    <name evidence="1" type="primary">rplE</name>
    <name type="ordered locus">ECED1_3971</name>
</gene>
<feature type="chain" id="PRO_1000166133" description="Large ribosomal subunit protein uL5">
    <location>
        <begin position="1"/>
        <end position="179"/>
    </location>
</feature>
<feature type="modified residue" description="N6-acetyllysine" evidence="1">
    <location>
        <position position="3"/>
    </location>
</feature>
<comment type="function">
    <text evidence="1">This is one of the proteins that bind and probably mediate the attachment of the 5S RNA into the large ribosomal subunit, where it forms part of the central protuberance. In the 70S ribosome it contacts protein S13 of the 30S subunit (bridge B1b), connecting the 2 subunits; this bridge is implicated in subunit movement. Contacts the P site tRNA; the 5S rRNA and some of its associated proteins might help stabilize positioning of ribosome-bound tRNAs.</text>
</comment>
<comment type="subunit">
    <text evidence="1">Part of the 50S ribosomal subunit; part of the 5S rRNA/L5/L18/L25 subcomplex. Contacts the 5S rRNA and the P site tRNA. Forms a bridge to the 30S subunit in the 70S ribosome.</text>
</comment>
<comment type="similarity">
    <text evidence="1">Belongs to the universal ribosomal protein uL5 family.</text>
</comment>
<name>RL5_ECO81</name>
<dbReference type="EMBL" id="CU928162">
    <property type="protein sequence ID" value="CAR10110.2"/>
    <property type="molecule type" value="Genomic_DNA"/>
</dbReference>
<dbReference type="RefSeq" id="WP_001096200.1">
    <property type="nucleotide sequence ID" value="NC_011745.1"/>
</dbReference>
<dbReference type="SMR" id="B7N192"/>
<dbReference type="GeneID" id="93778679"/>
<dbReference type="KEGG" id="ecq:ECED1_3971"/>
<dbReference type="HOGENOM" id="CLU_061015_2_1_6"/>
<dbReference type="Proteomes" id="UP000000748">
    <property type="component" value="Chromosome"/>
</dbReference>
<dbReference type="GO" id="GO:1990904">
    <property type="term" value="C:ribonucleoprotein complex"/>
    <property type="evidence" value="ECO:0007669"/>
    <property type="project" value="UniProtKB-KW"/>
</dbReference>
<dbReference type="GO" id="GO:0005840">
    <property type="term" value="C:ribosome"/>
    <property type="evidence" value="ECO:0007669"/>
    <property type="project" value="UniProtKB-KW"/>
</dbReference>
<dbReference type="GO" id="GO:0019843">
    <property type="term" value="F:rRNA binding"/>
    <property type="evidence" value="ECO:0007669"/>
    <property type="project" value="UniProtKB-UniRule"/>
</dbReference>
<dbReference type="GO" id="GO:0003735">
    <property type="term" value="F:structural constituent of ribosome"/>
    <property type="evidence" value="ECO:0007669"/>
    <property type="project" value="InterPro"/>
</dbReference>
<dbReference type="GO" id="GO:0000049">
    <property type="term" value="F:tRNA binding"/>
    <property type="evidence" value="ECO:0007669"/>
    <property type="project" value="UniProtKB-UniRule"/>
</dbReference>
<dbReference type="GO" id="GO:0006412">
    <property type="term" value="P:translation"/>
    <property type="evidence" value="ECO:0007669"/>
    <property type="project" value="UniProtKB-UniRule"/>
</dbReference>
<dbReference type="FunFam" id="3.30.1440.10:FF:000001">
    <property type="entry name" value="50S ribosomal protein L5"/>
    <property type="match status" value="1"/>
</dbReference>
<dbReference type="Gene3D" id="3.30.1440.10">
    <property type="match status" value="1"/>
</dbReference>
<dbReference type="HAMAP" id="MF_01333_B">
    <property type="entry name" value="Ribosomal_uL5_B"/>
    <property type="match status" value="1"/>
</dbReference>
<dbReference type="InterPro" id="IPR002132">
    <property type="entry name" value="Ribosomal_uL5"/>
</dbReference>
<dbReference type="InterPro" id="IPR020930">
    <property type="entry name" value="Ribosomal_uL5_bac-type"/>
</dbReference>
<dbReference type="InterPro" id="IPR031309">
    <property type="entry name" value="Ribosomal_uL5_C"/>
</dbReference>
<dbReference type="InterPro" id="IPR020929">
    <property type="entry name" value="Ribosomal_uL5_CS"/>
</dbReference>
<dbReference type="InterPro" id="IPR022803">
    <property type="entry name" value="Ribosomal_uL5_dom_sf"/>
</dbReference>
<dbReference type="InterPro" id="IPR031310">
    <property type="entry name" value="Ribosomal_uL5_N"/>
</dbReference>
<dbReference type="NCBIfam" id="NF000585">
    <property type="entry name" value="PRK00010.1"/>
    <property type="match status" value="1"/>
</dbReference>
<dbReference type="PANTHER" id="PTHR11994">
    <property type="entry name" value="60S RIBOSOMAL PROTEIN L11-RELATED"/>
    <property type="match status" value="1"/>
</dbReference>
<dbReference type="Pfam" id="PF00281">
    <property type="entry name" value="Ribosomal_L5"/>
    <property type="match status" value="1"/>
</dbReference>
<dbReference type="Pfam" id="PF00673">
    <property type="entry name" value="Ribosomal_L5_C"/>
    <property type="match status" value="1"/>
</dbReference>
<dbReference type="PIRSF" id="PIRSF002161">
    <property type="entry name" value="Ribosomal_L5"/>
    <property type="match status" value="1"/>
</dbReference>
<dbReference type="SUPFAM" id="SSF55282">
    <property type="entry name" value="RL5-like"/>
    <property type="match status" value="1"/>
</dbReference>
<dbReference type="PROSITE" id="PS00358">
    <property type="entry name" value="RIBOSOMAL_L5"/>
    <property type="match status" value="1"/>
</dbReference>
<protein>
    <recommendedName>
        <fullName evidence="1">Large ribosomal subunit protein uL5</fullName>
    </recommendedName>
    <alternativeName>
        <fullName evidence="2">50S ribosomal protein L5</fullName>
    </alternativeName>
</protein>
<keyword id="KW-0007">Acetylation</keyword>
<keyword id="KW-0687">Ribonucleoprotein</keyword>
<keyword id="KW-0689">Ribosomal protein</keyword>
<keyword id="KW-0694">RNA-binding</keyword>
<keyword id="KW-0699">rRNA-binding</keyword>
<keyword id="KW-0820">tRNA-binding</keyword>